<sequence length="823" mass="93570">MGKKRTKGKTVPIDDSSETLEPVCRHIRKGLEQGNLKKALVNVEWNICQDCKTDNKVKDKAEEETEEKPSVWLCLKCGHQGCGRNSQEQHALKHYLTPRSEPHCLVLSLDNWSVWCYVCDNEVQYCSSNQLGQVVDYVRKQASITTPKPAEKDNGNIELENKKLEKESKNEQEREKKENMAKENPPMNSPCQITVKGLSNLGNTCFFNAVMQNLSQTPVLRELLKEVKMSGTIVKIEPPDLALTEPLEINLEPPGPLTLAMSQFLNEMQETKKGVVTPKELFSQVCKKAVRFKGYQQQDSQELLRYLLDGMRAEEHQRVSKGILKAFGNSTEKLDEELKNKVKDYEKKKSMPSFVDRIFGGELTSMIMCDQCRTVSLVHESFLDLSLPVLDDQSGKKSVNDKNLKKTVEDEDQDSEEEKDNDSYIKERSDIPSGTSKHLQKKAKKQAKKQAKNQRRQQKIQGKVLHLNDICTIDHPEDSEYEAEMSLQGEVNIKSNHISQEGVMHKEYCVNQKDLNGQAKMIESVTDNQKSTEEVDMKNINMDNDLEVLTSSPTRNLNGAYLTEGSNGEVDISNGFKNLNLNAALHPDEINIEILNDSHTPGTKVYEVVNEDPETAFCTLANREVFNTDECSIQHCLYQFTRNEKLRDANKLLCEVCTRRQCNGPKANIKGERKHVYTNAKKQMLISLAPPVLTLHLKRFQQAGFNLRKVNKHIKFPEILDLAPFCTLKCKNVAEENTRVLYSLYGVVEHSGTMRSGHYTAYAKARTANSHLSNLVLHGDIPQDFEMESKGQWFHISDTHVQAVPTTKVLNSQAYLLFYERIL</sequence>
<accession>Q9Y5T5</accession>
<accession>A8MU43</accession>
<accession>B3KN13</accession>
<accession>B4DFV8</accession>
<accession>B4DY37</accession>
<accession>D3DSD9</accession>
<accession>Q53GP7</accession>
<accession>Q53HA0</accession>
<accession>Q5VKN8</accession>
<accession>Q8NEL3</accession>
<accession>Q9H3E6</accession>
<proteinExistence type="evidence at protein level"/>
<comment type="function">
    <text evidence="2 10 11">Specifically deubiquitinates 'Lys-120' of histone H2A (H2AK119Ub), a specific tag for epigenetic transcriptional repression, thereby acting as a coactivator (PubMed:17914355). Deubiquitination of histone H2A is a prerequisite for subsequent phosphorylation at 'Ser-11' of histone H3 (H3S10ph), and is required for chromosome segregation when cells enter into mitosis (PubMed:17914355). In resting B- and T-lymphocytes, phosphorylation by AURKB leads to enhance its activity, thereby maintaining transcription in resting lymphocytes. Regulates Hox gene expression via histone H2A deubiquitination (PubMed:17914355). Prefers nucleosomal substrates (PubMed:17914355). Does not deubiquitinate histone H2B (PubMed:17914355). Also deubiquitinates non-histone proteins, such as ribosomal protein RPS27A: deubiquitination of monoubiquitinated RPS27A promotes maturation of the 40S ribosomal subunit (PubMed:32129764). Also mediates deubiquitination of tektin proteins (TEKT1, TEKT2, TEK3, TEKT4 and TEKT5), promoting their stability.</text>
</comment>
<comment type="catalytic activity">
    <reaction evidence="2 10 11">
        <text>Thiol-dependent hydrolysis of ester, thioester, amide, peptide and isopeptide bonds formed by the C-terminal Gly of ubiquitin (a 76-residue protein attached to proteins as an intracellular targeting signal).</text>
        <dbReference type="EC" id="3.4.19.12"/>
    </reaction>
</comment>
<comment type="subunit">
    <text evidence="2 10 11">Homotetramer (PubMed:17914355). Associates with late pre-40S ribosomes (PubMed:32129764). Interacts with CEP78; promoting deubiquitination of tektins.</text>
</comment>
<comment type="interaction">
    <interactant intactId="EBI-16813369">
        <id>Q9Y5T5-2</id>
    </interactant>
    <interactant intactId="EBI-1055254">
        <id>Q8WXH2</id>
        <label>JPH3</label>
    </interactant>
    <organismsDiffer>false</organismsDiffer>
    <experiments>3</experiments>
</comment>
<comment type="subcellular location">
    <subcellularLocation>
        <location evidence="16">Nucleus</location>
    </subcellularLocation>
    <subcellularLocation>
        <location evidence="11">Cytoplasm</location>
    </subcellularLocation>
</comment>
<comment type="alternative products">
    <event type="alternative splicing"/>
    <isoform>
        <id>Q9Y5T5-1</id>
        <name>1</name>
        <sequence type="displayed"/>
    </isoform>
    <isoform>
        <id>Q9Y5T5-2</id>
        <name>2</name>
        <sequence type="described" ref="VSP_036715"/>
    </isoform>
    <isoform>
        <id>Q9Y5T5-3</id>
        <name>3</name>
        <sequence type="described" ref="VSP_036714 VSP_036715"/>
    </isoform>
    <isoform>
        <id>Q9Y5T5-4</id>
        <name>4</name>
        <sequence type="described" ref="VSP_036713"/>
    </isoform>
    <isoform>
        <id>Q9Y5T5-5</id>
        <name>5</name>
        <sequence type="described" ref="VSP_036716"/>
    </isoform>
</comment>
<comment type="tissue specificity">
    <text evidence="5">Present in all the tissues examined including fetal brain, lung, liver, kidney, and adult heart, brain, placenta, lung, liver, skeletal muscle, kidney and pancreas.</text>
</comment>
<comment type="domain">
    <text evidence="9">The UBP-type zinc finger binds 3 zinc ions that form a pair of cross-braced ring fingers encapsulated within a third zinc finger in the primary structure. It recognizes the C-terminal tail of free ubiquitin.</text>
</comment>
<comment type="PTM">
    <text evidence="2 5">Phosphorylated at the onset of mitosis and dephosphorylated during the metaphase/anaphase transition. Phosphorylation by AURKB enhances the deubiquitinase activity.</text>
</comment>
<comment type="disease">
    <text>A chromosomal aberration involving USP16 is a cause of Chronic myelomonocytic leukemia. Inversion inv(21) (q21;q22) with RUNX1/AML1.</text>
</comment>
<comment type="miscellaneous">
    <text evidence="17">USP16 may contribute to somatic stem cell defects observed in Down syndrome. USP16 is triplicated in Down syndrome and its overexpression may contribute to proliferation defects in stem cells. Reduction of USP16 levels results in increased proliferation capacity of Down syndrome fibroblasts (PubMed:24025767).</text>
</comment>
<comment type="similarity">
    <text evidence="2">Belongs to the peptidase C19 family. USP16 subfamily.</text>
</comment>
<comment type="sequence caution" evidence="15">
    <conflict type="erroneous initiation">
        <sequence resource="EMBL-CDS" id="AAG39290"/>
    </conflict>
</comment>
<comment type="sequence caution" evidence="15">
    <conflict type="erroneous initiation">
        <sequence resource="EMBL-CDS" id="BAG51175"/>
    </conflict>
</comment>
<protein>
    <recommendedName>
        <fullName evidence="2">Ubiquitin carboxyl-terminal hydrolase 16</fullName>
        <ecNumber evidence="2 10 11">3.4.19.12</ecNumber>
    </recommendedName>
    <alternativeName>
        <fullName evidence="2">Deubiquitinating enzyme 16</fullName>
    </alternativeName>
    <alternativeName>
        <fullName evidence="2">Ubiquitin thioesterase 16</fullName>
    </alternativeName>
    <alternativeName>
        <fullName>Ubiquitin-processing protease UBP-M</fullName>
    </alternativeName>
    <alternativeName>
        <fullName evidence="2">Ubiquitin-specific-processing protease 16</fullName>
    </alternativeName>
</protein>
<organism>
    <name type="scientific">Homo sapiens</name>
    <name type="common">Human</name>
    <dbReference type="NCBI Taxonomy" id="9606"/>
    <lineage>
        <taxon>Eukaryota</taxon>
        <taxon>Metazoa</taxon>
        <taxon>Chordata</taxon>
        <taxon>Craniata</taxon>
        <taxon>Vertebrata</taxon>
        <taxon>Euteleostomi</taxon>
        <taxon>Mammalia</taxon>
        <taxon>Eutheria</taxon>
        <taxon>Euarchontoglires</taxon>
        <taxon>Primates</taxon>
        <taxon>Haplorrhini</taxon>
        <taxon>Catarrhini</taxon>
        <taxon>Hominidae</taxon>
        <taxon>Homo</taxon>
    </lineage>
</organism>
<gene>
    <name evidence="2" type="primary">USP16</name>
    <name type="ORF">MSTP039</name>
</gene>
<name>UBP16_HUMAN</name>
<reference key="1">
    <citation type="journal article" date="1999" name="Proc. Natl. Acad. Sci. U.S.A.">
        <title>A mutant deubiquitinating enzyme (Ubp-M) associates with mitotic chromosomes and blocks cell division.</title>
        <authorList>
            <person name="Cai S.-Y."/>
            <person name="Babbitt R.W."/>
            <person name="Marchesi V.T."/>
        </authorList>
    </citation>
    <scope>NUCLEOTIDE SEQUENCE [MRNA] (ISOFORM 1)</scope>
    <scope>TISSUE SPECIFICITY</scope>
    <scope>PHOSPHORYLATION</scope>
    <scope>MUTAGENESIS OF CYS-205</scope>
</reference>
<reference key="2">
    <citation type="submission" date="2003-07" db="EMBL/GenBank/DDBJ databases">
        <authorList>
            <person name="Grimbert P."/>
            <person name="Pawlak A."/>
            <person name="Sahali D."/>
        </authorList>
    </citation>
    <scope>NUCLEOTIDE SEQUENCE [MRNA] (ISOFORM 5)</scope>
</reference>
<reference key="3">
    <citation type="journal article" date="2004" name="Nat. Genet.">
        <title>Complete sequencing and characterization of 21,243 full-length human cDNAs.</title>
        <authorList>
            <person name="Ota T."/>
            <person name="Suzuki Y."/>
            <person name="Nishikawa T."/>
            <person name="Otsuki T."/>
            <person name="Sugiyama T."/>
            <person name="Irie R."/>
            <person name="Wakamatsu A."/>
            <person name="Hayashi K."/>
            <person name="Sato H."/>
            <person name="Nagai K."/>
            <person name="Kimura K."/>
            <person name="Makita H."/>
            <person name="Sekine M."/>
            <person name="Obayashi M."/>
            <person name="Nishi T."/>
            <person name="Shibahara T."/>
            <person name="Tanaka T."/>
            <person name="Ishii S."/>
            <person name="Yamamoto J."/>
            <person name="Saito K."/>
            <person name="Kawai Y."/>
            <person name="Isono Y."/>
            <person name="Nakamura Y."/>
            <person name="Nagahari K."/>
            <person name="Murakami K."/>
            <person name="Yasuda T."/>
            <person name="Iwayanagi T."/>
            <person name="Wagatsuma M."/>
            <person name="Shiratori A."/>
            <person name="Sudo H."/>
            <person name="Hosoiri T."/>
            <person name="Kaku Y."/>
            <person name="Kodaira H."/>
            <person name="Kondo H."/>
            <person name="Sugawara M."/>
            <person name="Takahashi M."/>
            <person name="Kanda K."/>
            <person name="Yokoi T."/>
            <person name="Furuya T."/>
            <person name="Kikkawa E."/>
            <person name="Omura Y."/>
            <person name="Abe K."/>
            <person name="Kamihara K."/>
            <person name="Katsuta N."/>
            <person name="Sato K."/>
            <person name="Tanikawa M."/>
            <person name="Yamazaki M."/>
            <person name="Ninomiya K."/>
            <person name="Ishibashi T."/>
            <person name="Yamashita H."/>
            <person name="Murakawa K."/>
            <person name="Fujimori K."/>
            <person name="Tanai H."/>
            <person name="Kimata M."/>
            <person name="Watanabe M."/>
            <person name="Hiraoka S."/>
            <person name="Chiba Y."/>
            <person name="Ishida S."/>
            <person name="Ono Y."/>
            <person name="Takiguchi S."/>
            <person name="Watanabe S."/>
            <person name="Yosida M."/>
            <person name="Hotuta T."/>
            <person name="Kusano J."/>
            <person name="Kanehori K."/>
            <person name="Takahashi-Fujii A."/>
            <person name="Hara H."/>
            <person name="Tanase T.-O."/>
            <person name="Nomura Y."/>
            <person name="Togiya S."/>
            <person name="Komai F."/>
            <person name="Hara R."/>
            <person name="Takeuchi K."/>
            <person name="Arita M."/>
            <person name="Imose N."/>
            <person name="Musashino K."/>
            <person name="Yuuki H."/>
            <person name="Oshima A."/>
            <person name="Sasaki N."/>
            <person name="Aotsuka S."/>
            <person name="Yoshikawa Y."/>
            <person name="Matsunawa H."/>
            <person name="Ichihara T."/>
            <person name="Shiohata N."/>
            <person name="Sano S."/>
            <person name="Moriya S."/>
            <person name="Momiyama H."/>
            <person name="Satoh N."/>
            <person name="Takami S."/>
            <person name="Terashima Y."/>
            <person name="Suzuki O."/>
            <person name="Nakagawa S."/>
            <person name="Senoh A."/>
            <person name="Mizoguchi H."/>
            <person name="Goto Y."/>
            <person name="Shimizu F."/>
            <person name="Wakebe H."/>
            <person name="Hishigaki H."/>
            <person name="Watanabe T."/>
            <person name="Sugiyama A."/>
            <person name="Takemoto M."/>
            <person name="Kawakami B."/>
            <person name="Yamazaki M."/>
            <person name="Watanabe K."/>
            <person name="Kumagai A."/>
            <person name="Itakura S."/>
            <person name="Fukuzumi Y."/>
            <person name="Fujimori Y."/>
            <person name="Komiyama M."/>
            <person name="Tashiro H."/>
            <person name="Tanigami A."/>
            <person name="Fujiwara T."/>
            <person name="Ono T."/>
            <person name="Yamada K."/>
            <person name="Fujii Y."/>
            <person name="Ozaki K."/>
            <person name="Hirao M."/>
            <person name="Ohmori Y."/>
            <person name="Kawabata A."/>
            <person name="Hikiji T."/>
            <person name="Kobatake N."/>
            <person name="Inagaki H."/>
            <person name="Ikema Y."/>
            <person name="Okamoto S."/>
            <person name="Okitani R."/>
            <person name="Kawakami T."/>
            <person name="Noguchi S."/>
            <person name="Itoh T."/>
            <person name="Shigeta K."/>
            <person name="Senba T."/>
            <person name="Matsumura K."/>
            <person name="Nakajima Y."/>
            <person name="Mizuno T."/>
            <person name="Morinaga M."/>
            <person name="Sasaki M."/>
            <person name="Togashi T."/>
            <person name="Oyama M."/>
            <person name="Hata H."/>
            <person name="Watanabe M."/>
            <person name="Komatsu T."/>
            <person name="Mizushima-Sugano J."/>
            <person name="Satoh T."/>
            <person name="Shirai Y."/>
            <person name="Takahashi Y."/>
            <person name="Nakagawa K."/>
            <person name="Okumura K."/>
            <person name="Nagase T."/>
            <person name="Nomura N."/>
            <person name="Kikuchi H."/>
            <person name="Masuho Y."/>
            <person name="Yamashita R."/>
            <person name="Nakai K."/>
            <person name="Yada T."/>
            <person name="Nakamura Y."/>
            <person name="Ohara O."/>
            <person name="Isogai T."/>
            <person name="Sugano S."/>
        </authorList>
    </citation>
    <scope>NUCLEOTIDE SEQUENCE [LARGE SCALE MRNA] (ISOFORMS 3 AND 4)</scope>
    <scope>VARIANT HIS-141</scope>
    <source>
        <tissue>Amygdala</tissue>
        <tissue>Teratocarcinoma</tissue>
        <tissue>Testis</tissue>
    </source>
</reference>
<reference key="4">
    <citation type="submission" date="2005-04" db="EMBL/GenBank/DDBJ databases">
        <authorList>
            <person name="Suzuki Y."/>
            <person name="Sugano S."/>
            <person name="Totoki Y."/>
            <person name="Toyoda A."/>
            <person name="Takeda T."/>
            <person name="Sakaki Y."/>
            <person name="Tanaka A."/>
            <person name="Yokoyama S."/>
        </authorList>
    </citation>
    <scope>NUCLEOTIDE SEQUENCE [LARGE SCALE MRNA] (ISOFORM 1)</scope>
    <source>
        <tissue>Brain</tissue>
        <tissue>Liver</tissue>
    </source>
</reference>
<reference key="5">
    <citation type="journal article" date="2000" name="Nature">
        <title>The DNA sequence of human chromosome 21.</title>
        <authorList>
            <person name="Hattori M."/>
            <person name="Fujiyama A."/>
            <person name="Taylor T.D."/>
            <person name="Watanabe H."/>
            <person name="Yada T."/>
            <person name="Park H.-S."/>
            <person name="Toyoda A."/>
            <person name="Ishii K."/>
            <person name="Totoki Y."/>
            <person name="Choi D.-K."/>
            <person name="Groner Y."/>
            <person name="Soeda E."/>
            <person name="Ohki M."/>
            <person name="Takagi T."/>
            <person name="Sakaki Y."/>
            <person name="Taudien S."/>
            <person name="Blechschmidt K."/>
            <person name="Polley A."/>
            <person name="Menzel U."/>
            <person name="Delabar J."/>
            <person name="Kumpf K."/>
            <person name="Lehmann R."/>
            <person name="Patterson D."/>
            <person name="Reichwald K."/>
            <person name="Rump A."/>
            <person name="Schillhabel M."/>
            <person name="Schudy A."/>
            <person name="Zimmermann W."/>
            <person name="Rosenthal A."/>
            <person name="Kudoh J."/>
            <person name="Shibuya K."/>
            <person name="Kawasaki K."/>
            <person name="Asakawa S."/>
            <person name="Shintani A."/>
            <person name="Sasaki T."/>
            <person name="Nagamine K."/>
            <person name="Mitsuyama S."/>
            <person name="Antonarakis S.E."/>
            <person name="Minoshima S."/>
            <person name="Shimizu N."/>
            <person name="Nordsiek G."/>
            <person name="Hornischer K."/>
            <person name="Brandt P."/>
            <person name="Scharfe M."/>
            <person name="Schoen O."/>
            <person name="Desario A."/>
            <person name="Reichelt J."/>
            <person name="Kauer G."/>
            <person name="Bloecker H."/>
            <person name="Ramser J."/>
            <person name="Beck A."/>
            <person name="Klages S."/>
            <person name="Hennig S."/>
            <person name="Riesselmann L."/>
            <person name="Dagand E."/>
            <person name="Wehrmeyer S."/>
            <person name="Borzym K."/>
            <person name="Gardiner K."/>
            <person name="Nizetic D."/>
            <person name="Francis F."/>
            <person name="Lehrach H."/>
            <person name="Reinhardt R."/>
            <person name="Yaspo M.-L."/>
        </authorList>
    </citation>
    <scope>NUCLEOTIDE SEQUENCE [LARGE SCALE GENOMIC DNA]</scope>
</reference>
<reference key="6">
    <citation type="submission" date="2005-09" db="EMBL/GenBank/DDBJ databases">
        <authorList>
            <person name="Mural R.J."/>
            <person name="Istrail S."/>
            <person name="Sutton G.G."/>
            <person name="Florea L."/>
            <person name="Halpern A.L."/>
            <person name="Mobarry C.M."/>
            <person name="Lippert R."/>
            <person name="Walenz B."/>
            <person name="Shatkay H."/>
            <person name="Dew I."/>
            <person name="Miller J.R."/>
            <person name="Flanigan M.J."/>
            <person name="Edwards N.J."/>
            <person name="Bolanos R."/>
            <person name="Fasulo D."/>
            <person name="Halldorsson B.V."/>
            <person name="Hannenhalli S."/>
            <person name="Turner R."/>
            <person name="Yooseph S."/>
            <person name="Lu F."/>
            <person name="Nusskern D.R."/>
            <person name="Shue B.C."/>
            <person name="Zheng X.H."/>
            <person name="Zhong F."/>
            <person name="Delcher A.L."/>
            <person name="Huson D.H."/>
            <person name="Kravitz S.A."/>
            <person name="Mouchard L."/>
            <person name="Reinert K."/>
            <person name="Remington K.A."/>
            <person name="Clark A.G."/>
            <person name="Waterman M.S."/>
            <person name="Eichler E.E."/>
            <person name="Adams M.D."/>
            <person name="Hunkapiller M.W."/>
            <person name="Myers E.W."/>
            <person name="Venter J.C."/>
        </authorList>
    </citation>
    <scope>NUCLEOTIDE SEQUENCE [LARGE SCALE GENOMIC DNA]</scope>
</reference>
<reference key="7">
    <citation type="journal article" date="2004" name="Genome Res.">
        <title>The status, quality, and expansion of the NIH full-length cDNA project: the Mammalian Gene Collection (MGC).</title>
        <authorList>
            <consortium name="The MGC Project Team"/>
        </authorList>
    </citation>
    <scope>NUCLEOTIDE SEQUENCE [LARGE SCALE MRNA] (ISOFORM 2)</scope>
    <scope>VARIANT HIS-141</scope>
    <source>
        <tissue>Testis</tissue>
    </source>
</reference>
<reference key="8">
    <citation type="submission" date="1998-12" db="EMBL/GenBank/DDBJ databases">
        <authorList>
            <person name="Liu B."/>
            <person name="Liu Y.Q."/>
            <person name="Wang X.Y."/>
            <person name="Zhao B."/>
            <person name="Sheng H."/>
            <person name="Zhao X.W."/>
            <person name="Liu S."/>
            <person name="Xu Y.Y."/>
            <person name="Ye J."/>
            <person name="Song L."/>
            <person name="Gao Y."/>
            <person name="Zhang C.L."/>
            <person name="Zhang J."/>
            <person name="Wei Y.J."/>
            <person name="Cao H.Q."/>
            <person name="Zhao Y."/>
            <person name="Liu L.S."/>
            <person name="Ding J.F."/>
            <person name="Gao R.L."/>
            <person name="Wu Q.Y."/>
            <person name="Qiang B.Q."/>
            <person name="Yuan J.G."/>
            <person name="Liew C.C."/>
            <person name="Zhao M.S."/>
            <person name="Hui R.T."/>
        </authorList>
    </citation>
    <scope>NUCLEOTIDE SEQUENCE [LARGE SCALE MRNA] OF 139-823</scope>
    <source>
        <tissue>Aorta</tissue>
    </source>
</reference>
<reference key="9">
    <citation type="journal article" date="2001" name="Cell Death Differ.">
        <title>Caspase-dependent deubiquitination of monoubiquitinated nucleosomal histone H2A induced by diverse apoptogenic stimuli.</title>
        <authorList>
            <person name="Mimnaugh E.G."/>
            <person name="Kayastha G."/>
            <person name="McGovern N.B."/>
            <person name="Hwang S.G."/>
            <person name="Marcu M.G."/>
            <person name="Trepel J."/>
            <person name="Cai S.-Y."/>
            <person name="Marchesi V.T."/>
            <person name="Neckers L."/>
        </authorList>
    </citation>
    <scope>PRELIMINARY FUNCTION</scope>
    <scope>MUTAGENESIS OF CYS-205</scope>
</reference>
<reference key="10">
    <citation type="journal article" date="2007" name="Nature">
        <title>Regulation of cell cycle progression and gene expression by H2A deubiquitination.</title>
        <authorList>
            <person name="Joo H.-Y."/>
            <person name="Zhai L."/>
            <person name="Yang C."/>
            <person name="Nie S."/>
            <person name="Erdjument-Bromage H."/>
            <person name="Tempst P."/>
            <person name="Chang C."/>
            <person name="Wang H."/>
        </authorList>
    </citation>
    <scope>FUNCTION</scope>
    <scope>CATALYTIC ACTIVITY</scope>
    <scope>IDENTIFICATION BY MASS SPECTROMETRY</scope>
    <scope>SUBUNIT</scope>
    <scope>SUBCELLULAR LOCATION</scope>
    <scope>MUTAGENESIS OF CYS-205</scope>
</reference>
<reference key="11">
    <citation type="journal article" date="2008" name="BMC Cancer">
        <title>Genome profiling of chronic myelomonocytic leukemia: frequent alterations of RAS and RUNX1 genes.</title>
        <authorList>
            <person name="Gelsi-Boyer V."/>
            <person name="Trouplin V."/>
            <person name="Adelaide J."/>
            <person name="Aceto N."/>
            <person name="Remy V."/>
            <person name="Pinson S."/>
            <person name="Houdayer C."/>
            <person name="Arnoulet C."/>
            <person name="Sainty D."/>
            <person name="Bentires-Alj M."/>
            <person name="Olschwang S."/>
            <person name="Vey N."/>
            <person name="Mozziconacci M.-J."/>
            <person name="Birnbaum D."/>
            <person name="Chaffanet M."/>
        </authorList>
    </citation>
    <scope>CHROMOSOMAL REARRANGEMENT</scope>
</reference>
<reference key="12">
    <citation type="journal article" date="2008" name="Proc. Natl. Acad. Sci. U.S.A.">
        <title>A quantitative atlas of mitotic phosphorylation.</title>
        <authorList>
            <person name="Dephoure N."/>
            <person name="Zhou C."/>
            <person name="Villen J."/>
            <person name="Beausoleil S.A."/>
            <person name="Bakalarski C.E."/>
            <person name="Elledge S.J."/>
            <person name="Gygi S.P."/>
        </authorList>
    </citation>
    <scope>PHOSPHORYLATION [LARGE SCALE ANALYSIS] AT SER-415 AND SER-552</scope>
    <scope>IDENTIFICATION BY MASS SPECTROMETRY [LARGE SCALE ANALYSIS]</scope>
    <source>
        <tissue>Cervix carcinoma</tissue>
    </source>
</reference>
<reference key="13">
    <citation type="journal article" date="2009" name="Anal. Chem.">
        <title>Lys-N and trypsin cover complementary parts of the phosphoproteome in a refined SCX-based approach.</title>
        <authorList>
            <person name="Gauci S."/>
            <person name="Helbig A.O."/>
            <person name="Slijper M."/>
            <person name="Krijgsveld J."/>
            <person name="Heck A.J."/>
            <person name="Mohammed S."/>
        </authorList>
    </citation>
    <scope>IDENTIFICATION BY MASS SPECTROMETRY [LARGE SCALE ANALYSIS]</scope>
</reference>
<reference key="14">
    <citation type="journal article" date="2009" name="Sci. Signal.">
        <title>Quantitative phosphoproteomic analysis of T cell receptor signaling reveals system-wide modulation of protein-protein interactions.</title>
        <authorList>
            <person name="Mayya V."/>
            <person name="Lundgren D.H."/>
            <person name="Hwang S.-I."/>
            <person name="Rezaul K."/>
            <person name="Wu L."/>
            <person name="Eng J.K."/>
            <person name="Rodionov V."/>
            <person name="Han D.K."/>
        </authorList>
    </citation>
    <scope>PHOSPHORYLATION [LARGE SCALE ANALYSIS] AT SER-552</scope>
    <scope>IDENTIFICATION BY MASS SPECTROMETRY [LARGE SCALE ANALYSIS]</scope>
    <source>
        <tissue>Leukemic T-cell</tissue>
    </source>
</reference>
<reference key="15">
    <citation type="journal article" date="2010" name="Sci. Signal.">
        <title>Quantitative phosphoproteomics reveals widespread full phosphorylation site occupancy during mitosis.</title>
        <authorList>
            <person name="Olsen J.V."/>
            <person name="Vermeulen M."/>
            <person name="Santamaria A."/>
            <person name="Kumar C."/>
            <person name="Miller M.L."/>
            <person name="Jensen L.J."/>
            <person name="Gnad F."/>
            <person name="Cox J."/>
            <person name="Jensen T.S."/>
            <person name="Nigg E.A."/>
            <person name="Brunak S."/>
            <person name="Mann M."/>
        </authorList>
    </citation>
    <scope>PHOSPHORYLATION [LARGE SCALE ANALYSIS] AT SER-552 AND THR-554</scope>
    <scope>IDENTIFICATION BY MASS SPECTROMETRY [LARGE SCALE ANALYSIS]</scope>
    <source>
        <tissue>Cervix carcinoma</tissue>
    </source>
</reference>
<reference key="16">
    <citation type="journal article" date="2011" name="BMC Syst. Biol.">
        <title>Initial characterization of the human central proteome.</title>
        <authorList>
            <person name="Burkard T.R."/>
            <person name="Planyavsky M."/>
            <person name="Kaupe I."/>
            <person name="Breitwieser F.P."/>
            <person name="Buerckstuemmer T."/>
            <person name="Bennett K.L."/>
            <person name="Superti-Furga G."/>
            <person name="Colinge J."/>
        </authorList>
    </citation>
    <scope>IDENTIFICATION BY MASS SPECTROMETRY [LARGE SCALE ANALYSIS]</scope>
</reference>
<reference key="17">
    <citation type="journal article" date="2011" name="Sci. Signal.">
        <title>System-wide temporal characterization of the proteome and phosphoproteome of human embryonic stem cell differentiation.</title>
        <authorList>
            <person name="Rigbolt K.T."/>
            <person name="Prokhorova T.A."/>
            <person name="Akimov V."/>
            <person name="Henningsen J."/>
            <person name="Johansen P.T."/>
            <person name="Kratchmarova I."/>
            <person name="Kassem M."/>
            <person name="Mann M."/>
            <person name="Olsen J.V."/>
            <person name="Blagoev B."/>
        </authorList>
    </citation>
    <scope>PHOSPHORYLATION [LARGE SCALE ANALYSIS] AT SER-415</scope>
    <scope>IDENTIFICATION BY MASS SPECTROMETRY [LARGE SCALE ANALYSIS]</scope>
</reference>
<reference key="18">
    <citation type="journal article" date="2013" name="J. Proteome Res.">
        <title>Toward a comprehensive characterization of a human cancer cell phosphoproteome.</title>
        <authorList>
            <person name="Zhou H."/>
            <person name="Di Palma S."/>
            <person name="Preisinger C."/>
            <person name="Peng M."/>
            <person name="Polat A.N."/>
            <person name="Heck A.J."/>
            <person name="Mohammed S."/>
        </authorList>
    </citation>
    <scope>PHOSPHORYLATION [LARGE SCALE ANALYSIS] AT SER-189; SER-415 AND SER-552</scope>
    <scope>IDENTIFICATION BY MASS SPECTROMETRY [LARGE SCALE ANALYSIS]</scope>
    <source>
        <tissue>Cervix carcinoma</tissue>
        <tissue>Erythroleukemia</tissue>
    </source>
</reference>
<reference key="19">
    <citation type="journal article" date="2013" name="Nature">
        <title>Usp16 contributes to somatic stem-cell defects in Down's syndrome.</title>
        <authorList>
            <person name="Adorno M."/>
            <person name="Sikandar S."/>
            <person name="Mitra S.S."/>
            <person name="Kuo A."/>
            <person name="Nicolis Di Robilant B."/>
            <person name="Haro-Acosta V."/>
            <person name="Ouadah Y."/>
            <person name="Quarta M."/>
            <person name="Rodriguez J."/>
            <person name="Qian D."/>
            <person name="Reddy V.M."/>
            <person name="Cheshier S."/>
            <person name="Garner C.C."/>
            <person name="Clarke M.F."/>
        </authorList>
    </citation>
    <scope>POSSIBLE INVOLVEMENT IN DOWN SYNDROME</scope>
</reference>
<reference key="20">
    <citation type="journal article" date="2017" name="Nat. Struct. Mol. Biol.">
        <title>Site-specific mapping of the human SUMO proteome reveals co-modification with phosphorylation.</title>
        <authorList>
            <person name="Hendriks I.A."/>
            <person name="Lyon D."/>
            <person name="Young C."/>
            <person name="Jensen L.J."/>
            <person name="Vertegaal A.C."/>
            <person name="Nielsen M.L."/>
        </authorList>
    </citation>
    <scope>SUMOYLATION [LARGE SCALE ANALYSIS] AT LYS-140</scope>
    <scope>IDENTIFICATION BY MASS SPECTROMETRY [LARGE SCALE ANALYSIS]</scope>
</reference>
<reference key="21">
    <citation type="journal article" date="2020" name="Elife">
        <title>USP16 counteracts mono-ubiquitination of RPS27a and promotes maturation of the 40S ribosomal subunit.</title>
        <authorList>
            <person name="Montellese C."/>
            <person name="van den Heuvel J."/>
            <person name="Ashiono C."/>
            <person name="Doerner K."/>
            <person name="Melnik A."/>
            <person name="Jonas S."/>
            <person name="Zemp I."/>
            <person name="Picotti P."/>
            <person name="Gillet L.C."/>
            <person name="Kutay U."/>
        </authorList>
    </citation>
    <scope>FUNCTION</scope>
    <scope>CATALYTIC ACTIVITY</scope>
    <scope>SUBCELLULAR LOCATION</scope>
    <scope>INTERACTION WITH LATE PRE-40S RIBOSOME</scope>
    <scope>MUTAGENESIS OF CYS-205</scope>
</reference>
<reference key="22">
    <citation type="journal article" date="2007" name="J. Mol. Biol.">
        <title>Solution structure of the Ubp-M BUZ domain, a highly specific protein module that recognizes the C-terminal tail of free ubiquitin.</title>
        <authorList>
            <person name="Pai M.-T."/>
            <person name="Tzeng S.-R."/>
            <person name="Kovacs J.J."/>
            <person name="Keaton M.A."/>
            <person name="Li S.S.-C."/>
            <person name="Yao T.-P."/>
            <person name="Zhou P."/>
        </authorList>
    </citation>
    <scope>STRUCTURE BY NMR OF 22-143</scope>
    <scope>ZINC-BINDING</scope>
    <scope>DOMAIN</scope>
</reference>
<evidence type="ECO:0000250" key="1">
    <source>
        <dbReference type="UniProtKB" id="Q99LG0"/>
    </source>
</evidence>
<evidence type="ECO:0000255" key="2">
    <source>
        <dbReference type="HAMAP-Rule" id="MF_03062"/>
    </source>
</evidence>
<evidence type="ECO:0000255" key="3">
    <source>
        <dbReference type="PROSITE-ProRule" id="PRU00502"/>
    </source>
</evidence>
<evidence type="ECO:0000256" key="4">
    <source>
        <dbReference type="SAM" id="MobiDB-lite"/>
    </source>
</evidence>
<evidence type="ECO:0000269" key="5">
    <source>
    </source>
</evidence>
<evidence type="ECO:0000269" key="6">
    <source>
    </source>
</evidence>
<evidence type="ECO:0000269" key="7">
    <source>
    </source>
</evidence>
<evidence type="ECO:0000269" key="8">
    <source>
    </source>
</evidence>
<evidence type="ECO:0000269" key="9">
    <source>
    </source>
</evidence>
<evidence type="ECO:0000269" key="10">
    <source>
    </source>
</evidence>
<evidence type="ECO:0000269" key="11">
    <source>
    </source>
</evidence>
<evidence type="ECO:0000303" key="12">
    <source>
    </source>
</evidence>
<evidence type="ECO:0000303" key="13">
    <source>
    </source>
</evidence>
<evidence type="ECO:0000303" key="14">
    <source ref="2"/>
</evidence>
<evidence type="ECO:0000305" key="15"/>
<evidence type="ECO:0000305" key="16">
    <source>
    </source>
</evidence>
<evidence type="ECO:0000305" key="17">
    <source>
    </source>
</evidence>
<evidence type="ECO:0007744" key="18">
    <source>
    </source>
</evidence>
<evidence type="ECO:0007744" key="19">
    <source>
    </source>
</evidence>
<evidence type="ECO:0007744" key="20">
    <source>
    </source>
</evidence>
<evidence type="ECO:0007744" key="21">
    <source>
    </source>
</evidence>
<evidence type="ECO:0007744" key="22">
    <source>
    </source>
</evidence>
<evidence type="ECO:0007744" key="23">
    <source>
    </source>
</evidence>
<evidence type="ECO:0007829" key="24">
    <source>
        <dbReference type="PDB" id="2I50"/>
    </source>
</evidence>
<evidence type="ECO:0007829" key="25">
    <source>
        <dbReference type="PDB" id="8WG5"/>
    </source>
</evidence>
<dbReference type="EC" id="3.4.19.12" evidence="2 10 11"/>
<dbReference type="EMBL" id="AF126736">
    <property type="protein sequence ID" value="AAD20949.1"/>
    <property type="molecule type" value="mRNA"/>
</dbReference>
<dbReference type="EMBL" id="AY333928">
    <property type="protein sequence ID" value="AAR13293.1"/>
    <property type="molecule type" value="mRNA"/>
</dbReference>
<dbReference type="EMBL" id="AK023247">
    <property type="protein sequence ID" value="BAG51175.1"/>
    <property type="status" value="ALT_INIT"/>
    <property type="molecule type" value="mRNA"/>
</dbReference>
<dbReference type="EMBL" id="AK302247">
    <property type="protein sequence ID" value="BAG63599.1"/>
    <property type="molecule type" value="mRNA"/>
</dbReference>
<dbReference type="EMBL" id="AK294284">
    <property type="protein sequence ID" value="BAG57569.1"/>
    <property type="molecule type" value="mRNA"/>
</dbReference>
<dbReference type="EMBL" id="AK222681">
    <property type="protein sequence ID" value="BAD96401.1"/>
    <property type="molecule type" value="mRNA"/>
</dbReference>
<dbReference type="EMBL" id="AK222884">
    <property type="protein sequence ID" value="BAD96604.1"/>
    <property type="molecule type" value="mRNA"/>
</dbReference>
<dbReference type="EMBL" id="AL163249">
    <property type="protein sequence ID" value="CAB90432.1"/>
    <property type="molecule type" value="Genomic_DNA"/>
</dbReference>
<dbReference type="EMBL" id="AF129075">
    <property type="status" value="NOT_ANNOTATED_CDS"/>
    <property type="molecule type" value="Genomic_DNA"/>
</dbReference>
<dbReference type="EMBL" id="CH471079">
    <property type="protein sequence ID" value="EAX09927.1"/>
    <property type="molecule type" value="Genomic_DNA"/>
</dbReference>
<dbReference type="EMBL" id="CH471079">
    <property type="protein sequence ID" value="EAX09929.1"/>
    <property type="molecule type" value="Genomic_DNA"/>
</dbReference>
<dbReference type="EMBL" id="BC030777">
    <property type="protein sequence ID" value="AAH30777.1"/>
    <property type="molecule type" value="mRNA"/>
</dbReference>
<dbReference type="EMBL" id="AF113219">
    <property type="protein sequence ID" value="AAG39290.1"/>
    <property type="status" value="ALT_INIT"/>
    <property type="molecule type" value="mRNA"/>
</dbReference>
<dbReference type="CCDS" id="CCDS13583.1">
    <molecule id="Q9Y5T5-1"/>
</dbReference>
<dbReference type="CCDS" id="CCDS42912.1">
    <molecule id="Q9Y5T5-2"/>
</dbReference>
<dbReference type="RefSeq" id="NP_001001992.1">
    <molecule id="Q9Y5T5-2"/>
    <property type="nucleotide sequence ID" value="NM_001001992.2"/>
</dbReference>
<dbReference type="RefSeq" id="NP_001027582.1">
    <molecule id="Q9Y5T5-1"/>
    <property type="nucleotide sequence ID" value="NM_001032410.2"/>
</dbReference>
<dbReference type="RefSeq" id="NP_006438.1">
    <molecule id="Q9Y5T5-1"/>
    <property type="nucleotide sequence ID" value="NM_006447.3"/>
</dbReference>
<dbReference type="RefSeq" id="XP_016883746.1">
    <molecule id="Q9Y5T5-1"/>
    <property type="nucleotide sequence ID" value="XM_017028257.2"/>
</dbReference>
<dbReference type="RefSeq" id="XP_016883747.1">
    <molecule id="Q9Y5T5-2"/>
    <property type="nucleotide sequence ID" value="XM_017028258.2"/>
</dbReference>
<dbReference type="RefSeq" id="XP_016883748.1">
    <molecule id="Q9Y5T5-2"/>
    <property type="nucleotide sequence ID" value="XM_017028259.2"/>
</dbReference>
<dbReference type="RefSeq" id="XP_016883749.1">
    <property type="nucleotide sequence ID" value="XM_017028260.1"/>
</dbReference>
<dbReference type="RefSeq" id="XP_016883750.1">
    <property type="nucleotide sequence ID" value="XM_017028261.1"/>
</dbReference>
<dbReference type="RefSeq" id="XP_054180287.1">
    <molecule id="Q9Y5T5-1"/>
    <property type="nucleotide sequence ID" value="XM_054324312.1"/>
</dbReference>
<dbReference type="RefSeq" id="XP_054180288.1">
    <molecule id="Q9Y5T5-2"/>
    <property type="nucleotide sequence ID" value="XM_054324313.1"/>
</dbReference>
<dbReference type="RefSeq" id="XP_054180289.1">
    <molecule id="Q9Y5T5-2"/>
    <property type="nucleotide sequence ID" value="XM_054324314.1"/>
</dbReference>
<dbReference type="RefSeq" id="XP_054189276.1">
    <molecule id="Q9Y5T5-1"/>
    <property type="nucleotide sequence ID" value="XM_054333301.1"/>
</dbReference>
<dbReference type="RefSeq" id="XP_054189277.1">
    <molecule id="Q9Y5T5-2"/>
    <property type="nucleotide sequence ID" value="XM_054333302.1"/>
</dbReference>
<dbReference type="RefSeq" id="XP_054189278.1">
    <molecule id="Q9Y5T5-2"/>
    <property type="nucleotide sequence ID" value="XM_054333303.1"/>
</dbReference>
<dbReference type="PDB" id="2I50">
    <property type="method" value="NMR"/>
    <property type="chains" value="A=22-143"/>
</dbReference>
<dbReference type="PDB" id="8WG5">
    <property type="method" value="EM"/>
    <property type="resolution" value="3.05 A"/>
    <property type="chains" value="M=1-823"/>
</dbReference>
<dbReference type="PDBsum" id="2I50"/>
<dbReference type="PDBsum" id="8WG5"/>
<dbReference type="BMRB" id="Q9Y5T5"/>
<dbReference type="EMDB" id="EMD-37503"/>
<dbReference type="SMR" id="Q9Y5T5"/>
<dbReference type="BioGRID" id="115848">
    <property type="interactions" value="84"/>
</dbReference>
<dbReference type="DIP" id="DIP-53761N"/>
<dbReference type="FunCoup" id="Q9Y5T5">
    <property type="interactions" value="4765"/>
</dbReference>
<dbReference type="IntAct" id="Q9Y5T5">
    <property type="interactions" value="27"/>
</dbReference>
<dbReference type="STRING" id="9606.ENSP00000334808"/>
<dbReference type="BindingDB" id="Q9Y5T5"/>
<dbReference type="ChEMBL" id="CHEMBL4630865"/>
<dbReference type="MEROPS" id="C19.021"/>
<dbReference type="GlyGen" id="Q9Y5T5">
    <property type="glycosylation" value="1 site"/>
</dbReference>
<dbReference type="iPTMnet" id="Q9Y5T5"/>
<dbReference type="PhosphoSitePlus" id="Q9Y5T5"/>
<dbReference type="BioMuta" id="USP16"/>
<dbReference type="DMDM" id="6686071"/>
<dbReference type="jPOST" id="Q9Y5T5"/>
<dbReference type="MassIVE" id="Q9Y5T5"/>
<dbReference type="PaxDb" id="9606-ENSP00000334808"/>
<dbReference type="PeptideAtlas" id="Q9Y5T5"/>
<dbReference type="ProteomicsDB" id="86497">
    <molecule id="Q9Y5T5-1"/>
</dbReference>
<dbReference type="ProteomicsDB" id="86498">
    <molecule id="Q9Y5T5-2"/>
</dbReference>
<dbReference type="ProteomicsDB" id="86499">
    <molecule id="Q9Y5T5-3"/>
</dbReference>
<dbReference type="ProteomicsDB" id="86500">
    <molecule id="Q9Y5T5-4"/>
</dbReference>
<dbReference type="ProteomicsDB" id="86501">
    <molecule id="Q9Y5T5-5"/>
</dbReference>
<dbReference type="Pumba" id="Q9Y5T5"/>
<dbReference type="Antibodypedia" id="6359">
    <property type="antibodies" value="358 antibodies from 33 providers"/>
</dbReference>
<dbReference type="DNASU" id="10600"/>
<dbReference type="Ensembl" id="ENST00000334352.8">
    <molecule id="Q9Y5T5-1"/>
    <property type="protein sequence ID" value="ENSP00000334808.4"/>
    <property type="gene ID" value="ENSG00000156256.15"/>
</dbReference>
<dbReference type="Ensembl" id="ENST00000399975.7">
    <molecule id="Q9Y5T5-2"/>
    <property type="protein sequence ID" value="ENSP00000382857.3"/>
    <property type="gene ID" value="ENSG00000156256.15"/>
</dbReference>
<dbReference type="Ensembl" id="ENST00000399976.7">
    <molecule id="Q9Y5T5-1"/>
    <property type="protein sequence ID" value="ENSP00000382858.2"/>
    <property type="gene ID" value="ENSG00000156256.15"/>
</dbReference>
<dbReference type="Ensembl" id="ENST00000707868.1">
    <molecule id="Q9Y5T5-2"/>
    <property type="protein sequence ID" value="ENSP00000517012.1"/>
    <property type="gene ID" value="ENSG00000291527.1"/>
</dbReference>
<dbReference type="Ensembl" id="ENST00000707869.1">
    <molecule id="Q9Y5T5-1"/>
    <property type="protein sequence ID" value="ENSP00000517013.1"/>
    <property type="gene ID" value="ENSG00000291527.1"/>
</dbReference>
<dbReference type="Ensembl" id="ENST00000707870.1">
    <molecule id="Q9Y5T5-1"/>
    <property type="protein sequence ID" value="ENSP00000517014.1"/>
    <property type="gene ID" value="ENSG00000291527.1"/>
</dbReference>
<dbReference type="GeneID" id="10600"/>
<dbReference type="KEGG" id="hsa:10600"/>
<dbReference type="MANE-Select" id="ENST00000399976.7">
    <property type="protein sequence ID" value="ENSP00000382858.2"/>
    <property type="RefSeq nucleotide sequence ID" value="NM_006447.3"/>
    <property type="RefSeq protein sequence ID" value="NP_006438.1"/>
</dbReference>
<dbReference type="UCSC" id="uc002ymw.4">
    <molecule id="Q9Y5T5-1"/>
    <property type="organism name" value="human"/>
</dbReference>
<dbReference type="AGR" id="HGNC:12614"/>
<dbReference type="CTD" id="10600"/>
<dbReference type="DisGeNET" id="10600"/>
<dbReference type="GeneCards" id="USP16"/>
<dbReference type="HGNC" id="HGNC:12614">
    <property type="gene designation" value="USP16"/>
</dbReference>
<dbReference type="HPA" id="ENSG00000156256">
    <property type="expression patterns" value="Low tissue specificity"/>
</dbReference>
<dbReference type="MalaCards" id="USP16"/>
<dbReference type="MIM" id="604735">
    <property type="type" value="gene"/>
</dbReference>
<dbReference type="neXtProt" id="NX_Q9Y5T5"/>
<dbReference type="OpenTargets" id="ENSG00000156256"/>
<dbReference type="PharmGKB" id="PA37240"/>
<dbReference type="VEuPathDB" id="HostDB:ENSG00000156256"/>
<dbReference type="eggNOG" id="KOG1873">
    <property type="taxonomic scope" value="Eukaryota"/>
</dbReference>
<dbReference type="GeneTree" id="ENSGT00940000156013"/>
<dbReference type="HOGENOM" id="CLU_007938_1_0_1"/>
<dbReference type="InParanoid" id="Q9Y5T5"/>
<dbReference type="OMA" id="MAAGHYV"/>
<dbReference type="OrthoDB" id="2020758at2759"/>
<dbReference type="PAN-GO" id="Q9Y5T5">
    <property type="GO annotations" value="0 GO annotations based on evolutionary models"/>
</dbReference>
<dbReference type="PhylomeDB" id="Q9Y5T5"/>
<dbReference type="TreeFam" id="TF326075"/>
<dbReference type="PathwayCommons" id="Q9Y5T5"/>
<dbReference type="Reactome" id="R-HSA-5689880">
    <property type="pathway name" value="Ub-specific processing proteases"/>
</dbReference>
<dbReference type="SignaLink" id="Q9Y5T5"/>
<dbReference type="SIGNOR" id="Q9Y5T5"/>
<dbReference type="BioGRID-ORCS" id="10600">
    <property type="hits" value="16 hits in 1207 CRISPR screens"/>
</dbReference>
<dbReference type="ChiTaRS" id="USP16">
    <property type="organism name" value="human"/>
</dbReference>
<dbReference type="EvolutionaryTrace" id="Q9Y5T5"/>
<dbReference type="GeneWiki" id="USP16"/>
<dbReference type="GenomeRNAi" id="10600"/>
<dbReference type="Pharos" id="Q9Y5T5">
    <property type="development level" value="Tbio"/>
</dbReference>
<dbReference type="PRO" id="PR:Q9Y5T5"/>
<dbReference type="Proteomes" id="UP000005640">
    <property type="component" value="Chromosome 21"/>
</dbReference>
<dbReference type="RNAct" id="Q9Y5T5">
    <property type="molecule type" value="protein"/>
</dbReference>
<dbReference type="Bgee" id="ENSG00000156256">
    <property type="expression patterns" value="Expressed in oocyte and 209 other cell types or tissues"/>
</dbReference>
<dbReference type="ExpressionAtlas" id="Q9Y5T5">
    <property type="expression patterns" value="baseline and differential"/>
</dbReference>
<dbReference type="GO" id="GO:0005737">
    <property type="term" value="C:cytoplasm"/>
    <property type="evidence" value="ECO:0000314"/>
    <property type="project" value="UniProtKB"/>
</dbReference>
<dbReference type="GO" id="GO:0005654">
    <property type="term" value="C:nucleoplasm"/>
    <property type="evidence" value="ECO:0000304"/>
    <property type="project" value="Reactome"/>
</dbReference>
<dbReference type="GO" id="GO:0005634">
    <property type="term" value="C:nucleus"/>
    <property type="evidence" value="ECO:0000314"/>
    <property type="project" value="UniProtKB"/>
</dbReference>
<dbReference type="GO" id="GO:0004843">
    <property type="term" value="F:cysteine-type deubiquitinase activity"/>
    <property type="evidence" value="ECO:0000314"/>
    <property type="project" value="UniProtKB"/>
</dbReference>
<dbReference type="GO" id="GO:0004197">
    <property type="term" value="F:cysteine-type endopeptidase activity"/>
    <property type="evidence" value="ECO:0000315"/>
    <property type="project" value="UniProtKB"/>
</dbReference>
<dbReference type="GO" id="GO:0042393">
    <property type="term" value="F:histone binding"/>
    <property type="evidence" value="ECO:0000314"/>
    <property type="project" value="UniProtKB"/>
</dbReference>
<dbReference type="GO" id="GO:0140950">
    <property type="term" value="F:histone H2A deubiquitinase activity"/>
    <property type="evidence" value="ECO:0000315"/>
    <property type="project" value="UniProtKB"/>
</dbReference>
<dbReference type="GO" id="GO:0043024">
    <property type="term" value="F:ribosomal small subunit binding"/>
    <property type="evidence" value="ECO:0000314"/>
    <property type="project" value="UniProtKB"/>
</dbReference>
<dbReference type="GO" id="GO:0003713">
    <property type="term" value="F:transcription coactivator activity"/>
    <property type="evidence" value="ECO:0000314"/>
    <property type="project" value="UniProtKB"/>
</dbReference>
<dbReference type="GO" id="GO:0043130">
    <property type="term" value="F:ubiquitin binding"/>
    <property type="evidence" value="ECO:0000314"/>
    <property type="project" value="UniProtKB"/>
</dbReference>
<dbReference type="GO" id="GO:0008270">
    <property type="term" value="F:zinc ion binding"/>
    <property type="evidence" value="ECO:0000314"/>
    <property type="project" value="UniProtKB"/>
</dbReference>
<dbReference type="GO" id="GO:0051301">
    <property type="term" value="P:cell division"/>
    <property type="evidence" value="ECO:0007669"/>
    <property type="project" value="UniProtKB-KW"/>
</dbReference>
<dbReference type="GO" id="GO:0006974">
    <property type="term" value="P:DNA damage response"/>
    <property type="evidence" value="ECO:0000314"/>
    <property type="project" value="UniProtKB"/>
</dbReference>
<dbReference type="GO" id="GO:0140014">
    <property type="term" value="P:mitotic nuclear division"/>
    <property type="evidence" value="ECO:0007669"/>
    <property type="project" value="UniProtKB-UniRule"/>
</dbReference>
<dbReference type="GO" id="GO:0035520">
    <property type="term" value="P:monoubiquitinated protein deubiquitination"/>
    <property type="evidence" value="ECO:0000314"/>
    <property type="project" value="UniProtKB"/>
</dbReference>
<dbReference type="GO" id="GO:0045893">
    <property type="term" value="P:positive regulation of DNA-templated transcription"/>
    <property type="evidence" value="ECO:0000315"/>
    <property type="project" value="UniProtKB"/>
</dbReference>
<dbReference type="GO" id="GO:0090070">
    <property type="term" value="P:positive regulation of ribosome biogenesis"/>
    <property type="evidence" value="ECO:0000314"/>
    <property type="project" value="UniProtKB"/>
</dbReference>
<dbReference type="GO" id="GO:0045944">
    <property type="term" value="P:positive regulation of transcription by RNA polymerase II"/>
    <property type="evidence" value="ECO:0000250"/>
    <property type="project" value="UniProtKB"/>
</dbReference>
<dbReference type="GO" id="GO:0045901">
    <property type="term" value="P:positive regulation of translational elongation"/>
    <property type="evidence" value="ECO:0000315"/>
    <property type="project" value="UniProtKB"/>
</dbReference>
<dbReference type="GO" id="GO:0016579">
    <property type="term" value="P:protein deubiquitination"/>
    <property type="evidence" value="ECO:0000304"/>
    <property type="project" value="Reactome"/>
</dbReference>
<dbReference type="GO" id="GO:0051289">
    <property type="term" value="P:protein homotetramerization"/>
    <property type="evidence" value="ECO:0000353"/>
    <property type="project" value="UniProtKB"/>
</dbReference>
<dbReference type="GO" id="GO:0006508">
    <property type="term" value="P:proteolysis"/>
    <property type="evidence" value="ECO:0007669"/>
    <property type="project" value="UniProtKB-KW"/>
</dbReference>
<dbReference type="GO" id="GO:0051726">
    <property type="term" value="P:regulation of cell cycle"/>
    <property type="evidence" value="ECO:0007669"/>
    <property type="project" value="InterPro"/>
</dbReference>
<dbReference type="GO" id="GO:0006357">
    <property type="term" value="P:regulation of transcription by RNA polymerase II"/>
    <property type="evidence" value="ECO:0000250"/>
    <property type="project" value="UniProtKB"/>
</dbReference>
<dbReference type="CDD" id="cd02667">
    <property type="entry name" value="Peptidase_C19K"/>
    <property type="match status" value="1"/>
</dbReference>
<dbReference type="FunFam" id="3.30.40.10:FF:000147">
    <property type="entry name" value="Ubiquitin carboxyl-terminal hydrolase 16"/>
    <property type="match status" value="1"/>
</dbReference>
<dbReference type="FunFam" id="3.90.70.10:FF:000045">
    <property type="entry name" value="Ubiquitin carboxyl-terminal hydrolase 16"/>
    <property type="match status" value="1"/>
</dbReference>
<dbReference type="FunFam" id="3.90.70.10:FF:000082">
    <property type="entry name" value="Ubiquitin carboxyl-terminal hydrolase 16"/>
    <property type="match status" value="1"/>
</dbReference>
<dbReference type="Gene3D" id="3.90.70.10">
    <property type="entry name" value="Cysteine proteinases"/>
    <property type="match status" value="2"/>
</dbReference>
<dbReference type="Gene3D" id="3.30.40.10">
    <property type="entry name" value="Zinc/RING finger domain, C3HC4 (zinc finger)"/>
    <property type="match status" value="1"/>
</dbReference>
<dbReference type="HAMAP" id="MF_03062">
    <property type="entry name" value="UBP16"/>
    <property type="match status" value="1"/>
</dbReference>
<dbReference type="InterPro" id="IPR038765">
    <property type="entry name" value="Papain-like_cys_pep_sf"/>
</dbReference>
<dbReference type="InterPro" id="IPR050164">
    <property type="entry name" value="Peptidase_C19"/>
</dbReference>
<dbReference type="InterPro" id="IPR001394">
    <property type="entry name" value="Peptidase_C19_UCH"/>
</dbReference>
<dbReference type="InterPro" id="IPR030849">
    <property type="entry name" value="UBP16"/>
</dbReference>
<dbReference type="InterPro" id="IPR018200">
    <property type="entry name" value="USP_CS"/>
</dbReference>
<dbReference type="InterPro" id="IPR028889">
    <property type="entry name" value="USP_dom"/>
</dbReference>
<dbReference type="InterPro" id="IPR013083">
    <property type="entry name" value="Znf_RING/FYVE/PHD"/>
</dbReference>
<dbReference type="InterPro" id="IPR001607">
    <property type="entry name" value="Znf_UBP"/>
</dbReference>
<dbReference type="PANTHER" id="PTHR24006">
    <property type="entry name" value="UBIQUITIN CARBOXYL-TERMINAL HYDROLASE"/>
    <property type="match status" value="1"/>
</dbReference>
<dbReference type="PANTHER" id="PTHR24006:SF852">
    <property type="entry name" value="UBIQUITIN CARBOXYL-TERMINAL HYDROLASE"/>
    <property type="match status" value="1"/>
</dbReference>
<dbReference type="Pfam" id="PF00443">
    <property type="entry name" value="UCH"/>
    <property type="match status" value="1"/>
</dbReference>
<dbReference type="Pfam" id="PF02148">
    <property type="entry name" value="zf-UBP"/>
    <property type="match status" value="1"/>
</dbReference>
<dbReference type="SMART" id="SM00290">
    <property type="entry name" value="ZnF_UBP"/>
    <property type="match status" value="1"/>
</dbReference>
<dbReference type="SUPFAM" id="SSF54001">
    <property type="entry name" value="Cysteine proteinases"/>
    <property type="match status" value="1"/>
</dbReference>
<dbReference type="SUPFAM" id="SSF57850">
    <property type="entry name" value="RING/U-box"/>
    <property type="match status" value="1"/>
</dbReference>
<dbReference type="PROSITE" id="PS00972">
    <property type="entry name" value="USP_1"/>
    <property type="match status" value="1"/>
</dbReference>
<dbReference type="PROSITE" id="PS00973">
    <property type="entry name" value="USP_2"/>
    <property type="match status" value="1"/>
</dbReference>
<dbReference type="PROSITE" id="PS50235">
    <property type="entry name" value="USP_3"/>
    <property type="match status" value="1"/>
</dbReference>
<dbReference type="PROSITE" id="PS50271">
    <property type="entry name" value="ZF_UBP"/>
    <property type="match status" value="1"/>
</dbReference>
<feature type="chain" id="PRO_0000080643" description="Ubiquitin carboxyl-terminal hydrolase 16">
    <location>
        <begin position="1"/>
        <end position="823"/>
    </location>
</feature>
<feature type="domain" description="USP">
    <location>
        <begin position="196"/>
        <end position="822"/>
    </location>
</feature>
<feature type="zinc finger region" description="UBP-type" evidence="3">
    <location>
        <begin position="22"/>
        <end position="142"/>
    </location>
</feature>
<feature type="region of interest" description="Disordered" evidence="4">
    <location>
        <begin position="146"/>
        <end position="189"/>
    </location>
</feature>
<feature type="region of interest" description="Disordered" evidence="4">
    <location>
        <begin position="394"/>
        <end position="460"/>
    </location>
</feature>
<feature type="compositionally biased region" description="Basic and acidic residues" evidence="4">
    <location>
        <begin position="149"/>
        <end position="181"/>
    </location>
</feature>
<feature type="compositionally biased region" description="Basic and acidic residues" evidence="4">
    <location>
        <begin position="394"/>
        <end position="408"/>
    </location>
</feature>
<feature type="compositionally biased region" description="Acidic residues" evidence="4">
    <location>
        <begin position="409"/>
        <end position="420"/>
    </location>
</feature>
<feature type="compositionally biased region" description="Basic and acidic residues" evidence="4">
    <location>
        <begin position="421"/>
        <end position="430"/>
    </location>
</feature>
<feature type="compositionally biased region" description="Basic residues" evidence="4">
    <location>
        <begin position="438"/>
        <end position="458"/>
    </location>
</feature>
<feature type="active site" description="Nucleophile">
    <location>
        <position position="205"/>
    </location>
</feature>
<feature type="active site" description="Proton acceptor" evidence="2">
    <location>
        <position position="758"/>
    </location>
</feature>
<feature type="binding site" evidence="3">
    <location>
        <position position="24"/>
    </location>
    <ligand>
        <name>Zn(2+)</name>
        <dbReference type="ChEBI" id="CHEBI:29105"/>
        <label>1</label>
    </ligand>
</feature>
<feature type="binding site" evidence="3">
    <location>
        <position position="26"/>
    </location>
    <ligand>
        <name>Zn(2+)</name>
        <dbReference type="ChEBI" id="CHEBI:29105"/>
        <label>1</label>
    </ligand>
</feature>
<feature type="binding site" evidence="3">
    <location>
        <position position="48"/>
    </location>
    <ligand>
        <name>Zn(2+)</name>
        <dbReference type="ChEBI" id="CHEBI:29105"/>
        <label>2</label>
    </ligand>
</feature>
<feature type="binding site" evidence="3">
    <location>
        <position position="51"/>
    </location>
    <ligand>
        <name>Zn(2+)</name>
        <dbReference type="ChEBI" id="CHEBI:29105"/>
        <label>2</label>
    </ligand>
</feature>
<feature type="binding site" evidence="3">
    <location>
        <position position="74"/>
    </location>
    <ligand>
        <name>Zn(2+)</name>
        <dbReference type="ChEBI" id="CHEBI:29105"/>
        <label>3</label>
    </ligand>
</feature>
<feature type="binding site" evidence="3">
    <location>
        <position position="77"/>
    </location>
    <ligand>
        <name>Zn(2+)</name>
        <dbReference type="ChEBI" id="CHEBI:29105"/>
        <label>3</label>
    </ligand>
</feature>
<feature type="binding site" evidence="3">
    <location>
        <position position="82"/>
    </location>
    <ligand>
        <name>Zn(2+)</name>
        <dbReference type="ChEBI" id="CHEBI:29105"/>
        <label>2</label>
    </ligand>
</feature>
<feature type="binding site" evidence="3">
    <location>
        <position position="90"/>
    </location>
    <ligand>
        <name>Zn(2+)</name>
        <dbReference type="ChEBI" id="CHEBI:29105"/>
        <label>2</label>
    </ligand>
</feature>
<feature type="binding site" evidence="3">
    <location>
        <position position="94"/>
    </location>
    <ligand>
        <name>Zn(2+)</name>
        <dbReference type="ChEBI" id="CHEBI:29105"/>
        <label>3</label>
    </ligand>
</feature>
<feature type="binding site" evidence="3">
    <location>
        <position position="103"/>
    </location>
    <ligand>
        <name>Zn(2+)</name>
        <dbReference type="ChEBI" id="CHEBI:29105"/>
        <label>3</label>
    </ligand>
</feature>
<feature type="binding site" evidence="3">
    <location>
        <position position="116"/>
    </location>
    <ligand>
        <name>Zn(2+)</name>
        <dbReference type="ChEBI" id="CHEBI:29105"/>
        <label>1</label>
    </ligand>
</feature>
<feature type="binding site" evidence="3">
    <location>
        <position position="119"/>
    </location>
    <ligand>
        <name>Zn(2+)</name>
        <dbReference type="ChEBI" id="CHEBI:29105"/>
        <label>1</label>
    </ligand>
</feature>
<feature type="modified residue" description="Phosphoserine" evidence="22">
    <location>
        <position position="189"/>
    </location>
</feature>
<feature type="modified residue" description="Phosphoserine" evidence="18 21 22">
    <location>
        <position position="415"/>
    </location>
</feature>
<feature type="modified residue" description="Phosphoserine" evidence="1">
    <location>
        <position position="531"/>
    </location>
</feature>
<feature type="modified residue" description="Phosphoserine" evidence="18 19 20 22">
    <location>
        <position position="552"/>
    </location>
</feature>
<feature type="modified residue" description="Phosphothreonine" evidence="20">
    <location>
        <position position="554"/>
    </location>
</feature>
<feature type="cross-link" description="Glycyl lysine isopeptide (Lys-Gly) (interchain with G-Cter in SUMO2)" evidence="23">
    <location>
        <position position="140"/>
    </location>
</feature>
<feature type="splice variant" id="VSP_036713" description="In isoform 4." evidence="12">
    <location>
        <begin position="1"/>
        <end position="310"/>
    </location>
</feature>
<feature type="splice variant" id="VSP_036714" description="In isoform 3." evidence="12">
    <original>MGKKRTKGKTVPIDDSSETL</original>
    <variation>MGSVAV</variation>
    <location>
        <begin position="1"/>
        <end position="20"/>
    </location>
</feature>
<feature type="splice variant" id="VSP_036715" description="In isoform 2 and isoform 3." evidence="12 13">
    <location>
        <position position="150"/>
    </location>
</feature>
<feature type="splice variant" id="VSP_036716" description="In isoform 5." evidence="14">
    <original>SGKKSVNDKNLKKTVEDEDQDSEEEKDNDSYIKERSDIPSGTSKHLQKKAKKQAKKQAKNQRRQQKIQGKVLHLNDICTIDHPEDSEYEAEMSLQGEVNIKSNHISQEGVMHKEYCVNQKDLNGQAKMIESVTDNQKSTEEVDMKNINMDNDLEVLTSSPTRNLNGAYLTEGSNGEVDISNGFKNLNLNAALHPDEINIEILNDSHTPGTKVYEVVNEDPETAFCTLANREVFNTDECSIQHCLYQFTRNEKLRDANKLLCEVCTRRQCNGPKANIKGERKHVYTNAKKQMLISLAPPVLTLHLKRFQQAGFNLRKVNKHIKFPEILDLAPFCTLKCKNVAEENTRVLYSLYGVVEHSGTMRSGHYTAYAKARTANSHLSNLVLHGDIPQDFEMESKGQWFHISDTHVQAVPTTKVLNSQAYLLFYERIL</original>
    <variation>VRLLNLFYSSRFFFL</variation>
    <location>
        <begin position="394"/>
        <end position="823"/>
    </location>
</feature>
<feature type="sequence variant" id="VAR_020388" description="In dbSNP:rs2274802." evidence="7 8">
    <original>Q</original>
    <variation>H</variation>
    <location>
        <position position="141"/>
    </location>
</feature>
<feature type="mutagenesis site" description="Loss of enzyme activity." evidence="5 6 10 11">
    <original>C</original>
    <variation>S</variation>
    <location>
        <position position="205"/>
    </location>
</feature>
<feature type="sequence conflict" description="In Ref. 8; AAG39290." evidence="15" ref="8">
    <original>Q</original>
    <variation>E</variation>
    <location>
        <position position="141"/>
    </location>
</feature>
<feature type="sequence conflict" description="In Ref. 3; BAG51175." evidence="15" ref="3">
    <original>Q</original>
    <variation>R</variation>
    <location>
        <position position="297"/>
    </location>
</feature>
<feature type="sequence conflict" description="In Ref. 4; BAD96604." evidence="15" ref="4">
    <original>K</original>
    <variation>E</variation>
    <location>
        <position position="348"/>
    </location>
</feature>
<feature type="sequence conflict" description="In Ref. 4; BAD96401." evidence="15" ref="4">
    <original>S</original>
    <variation>P</variation>
    <location>
        <position position="350"/>
    </location>
</feature>
<feature type="sequence conflict" description="In Ref. 7; AAH30777." evidence="15" ref="7">
    <original>EY</original>
    <variation>DN</variation>
    <location>
        <begin position="480"/>
        <end position="481"/>
    </location>
</feature>
<feature type="helix" evidence="24">
    <location>
        <begin position="27"/>
        <end position="30"/>
    </location>
</feature>
<feature type="helix" evidence="24">
    <location>
        <begin position="33"/>
        <end position="40"/>
    </location>
</feature>
<feature type="strand" evidence="24">
    <location>
        <begin position="45"/>
        <end position="47"/>
    </location>
</feature>
<feature type="helix" evidence="24">
    <location>
        <begin position="49"/>
        <end position="52"/>
    </location>
</feature>
<feature type="turn" evidence="24">
    <location>
        <begin position="63"/>
        <end position="65"/>
    </location>
</feature>
<feature type="strand" evidence="24">
    <location>
        <begin position="71"/>
        <end position="74"/>
    </location>
</feature>
<feature type="turn" evidence="24">
    <location>
        <begin position="75"/>
        <end position="77"/>
    </location>
</feature>
<feature type="strand" evidence="24">
    <location>
        <begin position="80"/>
        <end position="82"/>
    </location>
</feature>
<feature type="strand" evidence="24">
    <location>
        <begin position="86"/>
        <end position="88"/>
    </location>
</feature>
<feature type="helix" evidence="24">
    <location>
        <begin position="90"/>
        <end position="96"/>
    </location>
</feature>
<feature type="strand" evidence="24">
    <location>
        <begin position="105"/>
        <end position="108"/>
    </location>
</feature>
<feature type="turn" evidence="24">
    <location>
        <begin position="109"/>
        <end position="111"/>
    </location>
</feature>
<feature type="strand" evidence="24">
    <location>
        <begin position="114"/>
        <end position="116"/>
    </location>
</feature>
<feature type="turn" evidence="24">
    <location>
        <begin position="117"/>
        <end position="120"/>
    </location>
</feature>
<feature type="strand" evidence="24">
    <location>
        <begin position="121"/>
        <end position="123"/>
    </location>
</feature>
<feature type="helix" evidence="24">
    <location>
        <begin position="130"/>
        <end position="142"/>
    </location>
</feature>
<feature type="helix" evidence="25">
    <location>
        <begin position="205"/>
        <end position="215"/>
    </location>
</feature>
<feature type="helix" evidence="25">
    <location>
        <begin position="218"/>
        <end position="228"/>
    </location>
</feature>
<feature type="helix" evidence="25">
    <location>
        <begin position="256"/>
        <end position="269"/>
    </location>
</feature>
<feature type="strand" evidence="25">
    <location>
        <begin position="273"/>
        <end position="276"/>
    </location>
</feature>
<feature type="helix" evidence="25">
    <location>
        <begin position="279"/>
        <end position="288"/>
    </location>
</feature>
<feature type="helix" evidence="25">
    <location>
        <begin position="290"/>
        <end position="292"/>
    </location>
</feature>
<feature type="strand" evidence="25">
    <location>
        <begin position="293"/>
        <end position="295"/>
    </location>
</feature>
<feature type="helix" evidence="25">
    <location>
        <begin position="300"/>
        <end position="327"/>
    </location>
</feature>
<feature type="helix" evidence="25">
    <location>
        <begin position="336"/>
        <end position="347"/>
    </location>
</feature>
<feature type="helix" evidence="25">
    <location>
        <begin position="355"/>
        <end position="357"/>
    </location>
</feature>
<feature type="strand" evidence="25">
    <location>
        <begin position="361"/>
        <end position="366"/>
    </location>
</feature>
<feature type="strand" evidence="25">
    <location>
        <begin position="377"/>
        <end position="383"/>
    </location>
</feature>
<feature type="strand" evidence="25">
    <location>
        <begin position="385"/>
        <end position="387"/>
    </location>
</feature>
<feature type="helix" evidence="25">
    <location>
        <begin position="633"/>
        <end position="640"/>
    </location>
</feature>
<feature type="strand" evidence="25">
    <location>
        <begin position="683"/>
        <end position="688"/>
    </location>
</feature>
<feature type="strand" evidence="25">
    <location>
        <begin position="691"/>
        <end position="697"/>
    </location>
</feature>
<feature type="strand" evidence="25">
    <location>
        <begin position="700"/>
        <end position="703"/>
    </location>
</feature>
<feature type="strand" evidence="25">
    <location>
        <begin position="706"/>
        <end position="709"/>
    </location>
</feature>
<feature type="strand" evidence="25">
    <location>
        <begin position="718"/>
        <end position="721"/>
    </location>
</feature>
<feature type="strand" evidence="25">
    <location>
        <begin position="741"/>
        <end position="750"/>
    </location>
</feature>
<feature type="strand" evidence="25">
    <location>
        <begin position="754"/>
        <end position="756"/>
    </location>
</feature>
<feature type="strand" evidence="25">
    <location>
        <begin position="759"/>
        <end position="764"/>
    </location>
</feature>
<feature type="strand" evidence="25">
    <location>
        <begin position="793"/>
        <end position="797"/>
    </location>
</feature>
<feature type="strand" evidence="25">
    <location>
        <begin position="800"/>
        <end position="803"/>
    </location>
</feature>
<feature type="helix" evidence="25">
    <location>
        <begin position="806"/>
        <end position="810"/>
    </location>
</feature>
<feature type="strand" evidence="25">
    <location>
        <begin position="814"/>
        <end position="821"/>
    </location>
</feature>
<keyword id="KW-0002">3D-structure</keyword>
<keyword id="KW-0010">Activator</keyword>
<keyword id="KW-0025">Alternative splicing</keyword>
<keyword id="KW-0131">Cell cycle</keyword>
<keyword id="KW-0132">Cell division</keyword>
<keyword id="KW-0156">Chromatin regulator</keyword>
<keyword id="KW-0160">Chromosomal rearrangement</keyword>
<keyword id="KW-0963">Cytoplasm</keyword>
<keyword id="KW-0378">Hydrolase</keyword>
<keyword id="KW-1017">Isopeptide bond</keyword>
<keyword id="KW-0479">Metal-binding</keyword>
<keyword id="KW-0498">Mitosis</keyword>
<keyword id="KW-0539">Nucleus</keyword>
<keyword id="KW-0597">Phosphoprotein</keyword>
<keyword id="KW-0645">Protease</keyword>
<keyword id="KW-1267">Proteomics identification</keyword>
<keyword id="KW-1185">Reference proteome</keyword>
<keyword id="KW-0788">Thiol protease</keyword>
<keyword id="KW-0804">Transcription</keyword>
<keyword id="KW-0805">Transcription regulation</keyword>
<keyword id="KW-0832">Ubl conjugation</keyword>
<keyword id="KW-0833">Ubl conjugation pathway</keyword>
<keyword id="KW-0862">Zinc</keyword>
<keyword id="KW-0863">Zinc-finger</keyword>